<gene>
    <name type="ORF">DDB_G0272682</name>
</gene>
<feature type="chain" id="PRO_0000367477" description="Uncharacterized protein DDB_G0272682">
    <location>
        <begin position="1"/>
        <end position="1107"/>
    </location>
</feature>
<feature type="region of interest" description="Disordered" evidence="2">
    <location>
        <begin position="180"/>
        <end position="251"/>
    </location>
</feature>
<feature type="region of interest" description="Disordered" evidence="2">
    <location>
        <begin position="501"/>
        <end position="530"/>
    </location>
</feature>
<feature type="coiled-coil region" evidence="1">
    <location>
        <begin position="789"/>
        <end position="816"/>
    </location>
</feature>
<feature type="coiled-coil region" evidence="1">
    <location>
        <begin position="940"/>
        <end position="1012"/>
    </location>
</feature>
<feature type="compositionally biased region" description="Low complexity" evidence="2">
    <location>
        <begin position="180"/>
        <end position="204"/>
    </location>
</feature>
<feature type="compositionally biased region" description="Gly residues" evidence="2">
    <location>
        <begin position="205"/>
        <end position="215"/>
    </location>
</feature>
<feature type="compositionally biased region" description="Polar residues" evidence="2">
    <location>
        <begin position="219"/>
        <end position="237"/>
    </location>
</feature>
<feature type="compositionally biased region" description="Low complexity" evidence="2">
    <location>
        <begin position="238"/>
        <end position="251"/>
    </location>
</feature>
<feature type="compositionally biased region" description="Low complexity" evidence="2">
    <location>
        <begin position="501"/>
        <end position="521"/>
    </location>
</feature>
<reference key="1">
    <citation type="journal article" date="2002" name="Nature">
        <title>Sequence and analysis of chromosome 2 of Dictyostelium discoideum.</title>
        <authorList>
            <person name="Gloeckner G."/>
            <person name="Eichinger L."/>
            <person name="Szafranski K."/>
            <person name="Pachebat J.A."/>
            <person name="Bankier A.T."/>
            <person name="Dear P.H."/>
            <person name="Lehmann R."/>
            <person name="Baumgart C."/>
            <person name="Parra G."/>
            <person name="Abril J.F."/>
            <person name="Guigo R."/>
            <person name="Kumpf K."/>
            <person name="Tunggal B."/>
            <person name="Cox E.C."/>
            <person name="Quail M.A."/>
            <person name="Platzer M."/>
            <person name="Rosenthal A."/>
            <person name="Noegel A.A."/>
        </authorList>
    </citation>
    <scope>NUCLEOTIDE SEQUENCE [LARGE SCALE GENOMIC DNA]</scope>
    <source>
        <strain>AX4</strain>
    </source>
</reference>
<reference key="2">
    <citation type="journal article" date="2005" name="Nature">
        <title>The genome of the social amoeba Dictyostelium discoideum.</title>
        <authorList>
            <person name="Eichinger L."/>
            <person name="Pachebat J.A."/>
            <person name="Gloeckner G."/>
            <person name="Rajandream M.A."/>
            <person name="Sucgang R."/>
            <person name="Berriman M."/>
            <person name="Song J."/>
            <person name="Olsen R."/>
            <person name="Szafranski K."/>
            <person name="Xu Q."/>
            <person name="Tunggal B."/>
            <person name="Kummerfeld S."/>
            <person name="Madera M."/>
            <person name="Konfortov B.A."/>
            <person name="Rivero F."/>
            <person name="Bankier A.T."/>
            <person name="Lehmann R."/>
            <person name="Hamlin N."/>
            <person name="Davies R."/>
            <person name="Gaudet P."/>
            <person name="Fey P."/>
            <person name="Pilcher K."/>
            <person name="Chen G."/>
            <person name="Saunders D."/>
            <person name="Sodergren E.J."/>
            <person name="Davis P."/>
            <person name="Kerhornou A."/>
            <person name="Nie X."/>
            <person name="Hall N."/>
            <person name="Anjard C."/>
            <person name="Hemphill L."/>
            <person name="Bason N."/>
            <person name="Farbrother P."/>
            <person name="Desany B."/>
            <person name="Just E."/>
            <person name="Morio T."/>
            <person name="Rost R."/>
            <person name="Churcher C.M."/>
            <person name="Cooper J."/>
            <person name="Haydock S."/>
            <person name="van Driessche N."/>
            <person name="Cronin A."/>
            <person name="Goodhead I."/>
            <person name="Muzny D.M."/>
            <person name="Mourier T."/>
            <person name="Pain A."/>
            <person name="Lu M."/>
            <person name="Harper D."/>
            <person name="Lindsay R."/>
            <person name="Hauser H."/>
            <person name="James K.D."/>
            <person name="Quiles M."/>
            <person name="Madan Babu M."/>
            <person name="Saito T."/>
            <person name="Buchrieser C."/>
            <person name="Wardroper A."/>
            <person name="Felder M."/>
            <person name="Thangavelu M."/>
            <person name="Johnson D."/>
            <person name="Knights A."/>
            <person name="Loulseged H."/>
            <person name="Mungall K.L."/>
            <person name="Oliver K."/>
            <person name="Price C."/>
            <person name="Quail M.A."/>
            <person name="Urushihara H."/>
            <person name="Hernandez J."/>
            <person name="Rabbinowitsch E."/>
            <person name="Steffen D."/>
            <person name="Sanders M."/>
            <person name="Ma J."/>
            <person name="Kohara Y."/>
            <person name="Sharp S."/>
            <person name="Simmonds M.N."/>
            <person name="Spiegler S."/>
            <person name="Tivey A."/>
            <person name="Sugano S."/>
            <person name="White B."/>
            <person name="Walker D."/>
            <person name="Woodward J.R."/>
            <person name="Winckler T."/>
            <person name="Tanaka Y."/>
            <person name="Shaulsky G."/>
            <person name="Schleicher M."/>
            <person name="Weinstock G.M."/>
            <person name="Rosenthal A."/>
            <person name="Cox E.C."/>
            <person name="Chisholm R.L."/>
            <person name="Gibbs R.A."/>
            <person name="Loomis W.F."/>
            <person name="Platzer M."/>
            <person name="Kay R.R."/>
            <person name="Williams J.G."/>
            <person name="Dear P.H."/>
            <person name="Noegel A.A."/>
            <person name="Barrell B.G."/>
            <person name="Kuspa A."/>
        </authorList>
    </citation>
    <scope>NUCLEOTIDE SEQUENCE [LARGE SCALE GENOMIC DNA]</scope>
    <source>
        <strain>AX4</strain>
    </source>
</reference>
<dbReference type="EMBL" id="AAFI02000008">
    <property type="protein sequence ID" value="EAS66955.1"/>
    <property type="molecule type" value="Genomic_DNA"/>
</dbReference>
<dbReference type="RefSeq" id="XP_001134621.1">
    <property type="nucleotide sequence ID" value="XM_001134621.1"/>
</dbReference>
<dbReference type="SMR" id="Q86IG2"/>
<dbReference type="FunCoup" id="Q86IG2">
    <property type="interactions" value="474"/>
</dbReference>
<dbReference type="PaxDb" id="44689-DDB0231751"/>
<dbReference type="EnsemblProtists" id="EAS66955">
    <property type="protein sequence ID" value="EAS66955"/>
    <property type="gene ID" value="DDB_G0272682"/>
</dbReference>
<dbReference type="GeneID" id="8618584"/>
<dbReference type="KEGG" id="ddi:DDB_G0272682"/>
<dbReference type="dictyBase" id="DDB_G0272682"/>
<dbReference type="VEuPathDB" id="AmoebaDB:DDB_G0272682"/>
<dbReference type="eggNOG" id="ENOG502RDXW">
    <property type="taxonomic scope" value="Eukaryota"/>
</dbReference>
<dbReference type="HOGENOM" id="CLU_282356_0_0_1"/>
<dbReference type="InParanoid" id="Q86IG2"/>
<dbReference type="OMA" id="FRQFNNG"/>
<dbReference type="Reactome" id="R-DDI-9840310">
    <property type="pathway name" value="Glycosphingolipid catabolism"/>
</dbReference>
<dbReference type="PRO" id="PR:Q86IG2"/>
<dbReference type="Proteomes" id="UP000002195">
    <property type="component" value="Chromosome 2"/>
</dbReference>
<dbReference type="GO" id="GO:0005737">
    <property type="term" value="C:cytoplasm"/>
    <property type="evidence" value="ECO:0000318"/>
    <property type="project" value="GO_Central"/>
</dbReference>
<dbReference type="GO" id="GO:0004620">
    <property type="term" value="F:phospholipase activity"/>
    <property type="evidence" value="ECO:0000318"/>
    <property type="project" value="GO_Central"/>
</dbReference>
<dbReference type="GO" id="GO:0004767">
    <property type="term" value="F:sphingomyelin phosphodiesterase activity"/>
    <property type="evidence" value="ECO:0007669"/>
    <property type="project" value="InterPro"/>
</dbReference>
<dbReference type="FunFam" id="3.60.10.10:FF:000276">
    <property type="entry name" value="Uncharacterized protein DDB_G0272682"/>
    <property type="match status" value="1"/>
</dbReference>
<dbReference type="Gene3D" id="2.60.270.50">
    <property type="match status" value="2"/>
</dbReference>
<dbReference type="Gene3D" id="3.60.10.10">
    <property type="entry name" value="Endonuclease/exonuclease/phosphatase"/>
    <property type="match status" value="1"/>
</dbReference>
<dbReference type="InterPro" id="IPR036691">
    <property type="entry name" value="Endo/exonu/phosph_ase_sf"/>
</dbReference>
<dbReference type="InterPro" id="IPR038772">
    <property type="entry name" value="Sph/SMPD2-like"/>
</dbReference>
<dbReference type="PANTHER" id="PTHR16320:SF19">
    <property type="entry name" value="ENDONUCLEASE_EXONUCLEASE_PHOSPHATASE DOMAIN-CONTAINING PROTEIN"/>
    <property type="match status" value="1"/>
</dbReference>
<dbReference type="PANTHER" id="PTHR16320">
    <property type="entry name" value="SPHINGOMYELINASE FAMILY MEMBER"/>
    <property type="match status" value="1"/>
</dbReference>
<dbReference type="SUPFAM" id="SSF56219">
    <property type="entry name" value="DNase I-like"/>
    <property type="match status" value="1"/>
</dbReference>
<accession>Q86IG2</accession>
<accession>Q1ZXN0</accession>
<name>Y2682_DICDI</name>
<evidence type="ECO:0000255" key="1"/>
<evidence type="ECO:0000256" key="2">
    <source>
        <dbReference type="SAM" id="MobiDB-lite"/>
    </source>
</evidence>
<protein>
    <recommendedName>
        <fullName>Uncharacterized protein DDB_G0272682</fullName>
    </recommendedName>
</protein>
<organism>
    <name type="scientific">Dictyostelium discoideum</name>
    <name type="common">Social amoeba</name>
    <dbReference type="NCBI Taxonomy" id="44689"/>
    <lineage>
        <taxon>Eukaryota</taxon>
        <taxon>Amoebozoa</taxon>
        <taxon>Evosea</taxon>
        <taxon>Eumycetozoa</taxon>
        <taxon>Dictyostelia</taxon>
        <taxon>Dictyosteliales</taxon>
        <taxon>Dictyosteliaceae</taxon>
        <taxon>Dictyostelium</taxon>
    </lineage>
</organism>
<proteinExistence type="predicted"/>
<keyword id="KW-0175">Coiled coil</keyword>
<keyword id="KW-1185">Reference proteome</keyword>
<sequence length="1107" mass="125035">MNKNQNDWKVELRKATRSSLISITNETDFQLQRISCKLQQGMLRLIPPEIIPPKSSIEFGTESNAFMTGTKGSVIYIVLPPSSSPINVGSIQSLTHLQSLKLWDPLVYIIIEWSTPYWSQHSCSIQVQPQQNSSLLNVKSNLSQREINKQIHSEVLMFIHNNDSNGEIQFKIYKNSLSNSGNGSSGGNNNNNNNSLNNSNNSIGSSGGNGGGGSNGSSPSMSPQFTSISKTNSPQIINTSSNNLNSSSGNNNKPIFSIVDNDYTSSQSTSSIPVVAGINSNSNSNTSGSGSTSISSPNSSFSSSLPSFFSNNFPLPWSNDGFGVDGGWKANVKRGSRGQFITIRNNTSKHLIRRNQTCLNSGRWCEPPPEGIPPNSMIEFGSVSSGFTTGTDGVIHYHSQGSKSDFRFQFNNPLMGKSSFTYHCPNGFNVEEKYTDGNISSVSFTINEGDSQTIPKQIPDSPLPIPPIKTDPKQVFINDDSIRIFSFNVGSINVKESGKELMNINNNNNNNNSNNNNNNNDQNKDKDNQMLNNSNLINKRIEQISKNLINFSEKYDIILLQEVFLDSSKDILIKNLKIYYPYIIDRCGENSGLFFASRFPPLWNEFRQFNNGIGSDVKYGKGVQGVKLDISTIKENTYLYVFNANLQANPDNSIAWQMVNGDDKQRKAATVRTLQLQSIRDFISTELAMQSSTIANSALLLVGDFNLNAEVEQVISDHESNSITLSQIIPELAKKINSKEITLTFSYQLLEYLNDLNIPMRYLGILRSQLQNNRMKSLVLTEMITYIIKKDIIEHLTQRHNQYQSNINEDEQIYREVVLETFNLIFHYTRKDCIQFWRHHLRKRLRSEFSSSLSEIEQQDWVDLRTHVINLQLFTSLKYSLEITFNPKAVFQIMKGSRINTKEIIPIPLILPEQIEEIILPPLTSYWGSDSNTDINYFTNIDHLKEQQKKQAQLQQLQQQQAQQQQQAQQQTQQQQNSNINIINTIESSQIQQNNNIQIYLKQTDEYNNMLKILGNPVDLFRESNPFSPGYTIHQSLNQRVEKPSLKERVDYILNFKLSPNFGDHEGRNQLLKLECTETNIVPMGATPQTRLSNHFALECILHIKKK</sequence>